<protein>
    <recommendedName>
        <fullName evidence="1">Glycogen synthase</fullName>
        <ecNumber evidence="1">2.4.1.21</ecNumber>
    </recommendedName>
    <alternativeName>
        <fullName evidence="1">Starch [bacterial glycogen] synthase</fullName>
    </alternativeName>
</protein>
<evidence type="ECO:0000255" key="1">
    <source>
        <dbReference type="HAMAP-Rule" id="MF_00484"/>
    </source>
</evidence>
<evidence type="ECO:0000256" key="2">
    <source>
        <dbReference type="SAM" id="MobiDB-lite"/>
    </source>
</evidence>
<sequence length="487" mass="55449">MRILFAAAECAPMIKVGGMGDVVGSLPPALKKLGHDVRLIIPGYGKLWTLMDIAPEPIFRSNTMGVDFSVFETKHPSNGLPIYLVGHPCFDSERIYGGEDEDWRFTFFASAVSEFAWNSWKPQVLHCHDWHTGMIPVWMHQDPEISTVFTIHNLKYQGPWRWKLDQITWCPWYMHGDHTMASAMLYADRVNAVSPTYSREIRTSEYGEKLEGLLNYISGKLRGILNGVDLDEWNPATDNSLPAKFSVDNISGRAINKRVLQERMGLEVNPDKYLMGMVGRLVDQKGIDLLLQVANRLLSYTDSQVVVLGTGDRYLESSLWQLAIEYPGRFSVFLTYDDALSRLIYGGADAFLMPSRFEPCGISQLLAMRYGAIPIVRKVGGLVDTVEPYNPMNETGSGFCFDRYEPIDFYTSLVRSWEAYRHQKSWKELQLRAMSNKYSWDRSAKEYELMYKDVCGIKEPSPDAAEVEKFSYGQEADPSRKGKKIKL</sequence>
<name>GLGA_PROM1</name>
<gene>
    <name evidence="1" type="primary">glgA</name>
    <name type="ordered locus">NATL1_06651</name>
</gene>
<comment type="function">
    <text evidence="1">Synthesizes alpha-1,4-glucan chains using ADP-glucose.</text>
</comment>
<comment type="catalytic activity">
    <reaction evidence="1">
        <text>[(1-&gt;4)-alpha-D-glucosyl](n) + ADP-alpha-D-glucose = [(1-&gt;4)-alpha-D-glucosyl](n+1) + ADP + H(+)</text>
        <dbReference type="Rhea" id="RHEA:18189"/>
        <dbReference type="Rhea" id="RHEA-COMP:9584"/>
        <dbReference type="Rhea" id="RHEA-COMP:9587"/>
        <dbReference type="ChEBI" id="CHEBI:15378"/>
        <dbReference type="ChEBI" id="CHEBI:15444"/>
        <dbReference type="ChEBI" id="CHEBI:57498"/>
        <dbReference type="ChEBI" id="CHEBI:456216"/>
        <dbReference type="EC" id="2.4.1.21"/>
    </reaction>
</comment>
<comment type="pathway">
    <text evidence="1">Glycan biosynthesis; glycogen biosynthesis.</text>
</comment>
<comment type="similarity">
    <text evidence="1">Belongs to the glycosyltransferase 1 family. Bacterial/plant glycogen synthase subfamily.</text>
</comment>
<organism>
    <name type="scientific">Prochlorococcus marinus (strain NATL1A)</name>
    <dbReference type="NCBI Taxonomy" id="167555"/>
    <lineage>
        <taxon>Bacteria</taxon>
        <taxon>Bacillati</taxon>
        <taxon>Cyanobacteriota</taxon>
        <taxon>Cyanophyceae</taxon>
        <taxon>Synechococcales</taxon>
        <taxon>Prochlorococcaceae</taxon>
        <taxon>Prochlorococcus</taxon>
    </lineage>
</organism>
<accession>A2C167</accession>
<keyword id="KW-0320">Glycogen biosynthesis</keyword>
<keyword id="KW-0328">Glycosyltransferase</keyword>
<keyword id="KW-0808">Transferase</keyword>
<proteinExistence type="inferred from homology"/>
<dbReference type="EC" id="2.4.1.21" evidence="1"/>
<dbReference type="EMBL" id="CP000553">
    <property type="protein sequence ID" value="ABM75227.1"/>
    <property type="molecule type" value="Genomic_DNA"/>
</dbReference>
<dbReference type="RefSeq" id="WP_011823388.1">
    <property type="nucleotide sequence ID" value="NC_008819.1"/>
</dbReference>
<dbReference type="SMR" id="A2C167"/>
<dbReference type="CAZy" id="GT5">
    <property type="family name" value="Glycosyltransferase Family 5"/>
</dbReference>
<dbReference type="KEGG" id="pme:NATL1_06651"/>
<dbReference type="eggNOG" id="COG0297">
    <property type="taxonomic scope" value="Bacteria"/>
</dbReference>
<dbReference type="HOGENOM" id="CLU_009583_18_2_3"/>
<dbReference type="UniPathway" id="UPA00164"/>
<dbReference type="Proteomes" id="UP000002592">
    <property type="component" value="Chromosome"/>
</dbReference>
<dbReference type="GO" id="GO:0009011">
    <property type="term" value="F:alpha-1,4-glucan glucosyltransferase (ADP-glucose donor) activity"/>
    <property type="evidence" value="ECO:0007669"/>
    <property type="project" value="UniProtKB-UniRule"/>
</dbReference>
<dbReference type="GO" id="GO:0004373">
    <property type="term" value="F:alpha-1,4-glucan glucosyltransferase (UDP-glucose donor) activity"/>
    <property type="evidence" value="ECO:0007669"/>
    <property type="project" value="InterPro"/>
</dbReference>
<dbReference type="GO" id="GO:0005978">
    <property type="term" value="P:glycogen biosynthetic process"/>
    <property type="evidence" value="ECO:0007669"/>
    <property type="project" value="UniProtKB-UniRule"/>
</dbReference>
<dbReference type="CDD" id="cd03791">
    <property type="entry name" value="GT5_Glycogen_synthase_DULL1-like"/>
    <property type="match status" value="1"/>
</dbReference>
<dbReference type="Gene3D" id="3.40.50.2000">
    <property type="entry name" value="Glycogen Phosphorylase B"/>
    <property type="match status" value="2"/>
</dbReference>
<dbReference type="HAMAP" id="MF_00484">
    <property type="entry name" value="Glycogen_synth"/>
    <property type="match status" value="1"/>
</dbReference>
<dbReference type="InterPro" id="IPR001296">
    <property type="entry name" value="Glyco_trans_1"/>
</dbReference>
<dbReference type="InterPro" id="IPR011835">
    <property type="entry name" value="GS/SS"/>
</dbReference>
<dbReference type="InterPro" id="IPR013534">
    <property type="entry name" value="Starch_synth_cat_dom"/>
</dbReference>
<dbReference type="NCBIfam" id="TIGR02095">
    <property type="entry name" value="glgA"/>
    <property type="match status" value="1"/>
</dbReference>
<dbReference type="NCBIfam" id="NF001900">
    <property type="entry name" value="PRK00654.1-3"/>
    <property type="match status" value="1"/>
</dbReference>
<dbReference type="PANTHER" id="PTHR45825:SF11">
    <property type="entry name" value="ALPHA AMYLASE DOMAIN-CONTAINING PROTEIN"/>
    <property type="match status" value="1"/>
</dbReference>
<dbReference type="PANTHER" id="PTHR45825">
    <property type="entry name" value="GRANULE-BOUND STARCH SYNTHASE 1, CHLOROPLASTIC/AMYLOPLASTIC"/>
    <property type="match status" value="1"/>
</dbReference>
<dbReference type="Pfam" id="PF08323">
    <property type="entry name" value="Glyco_transf_5"/>
    <property type="match status" value="1"/>
</dbReference>
<dbReference type="Pfam" id="PF00534">
    <property type="entry name" value="Glycos_transf_1"/>
    <property type="match status" value="1"/>
</dbReference>
<dbReference type="SUPFAM" id="SSF53756">
    <property type="entry name" value="UDP-Glycosyltransferase/glycogen phosphorylase"/>
    <property type="match status" value="1"/>
</dbReference>
<feature type="chain" id="PRO_1000014374" description="Glycogen synthase">
    <location>
        <begin position="1"/>
        <end position="487"/>
    </location>
</feature>
<feature type="region of interest" description="Disordered" evidence="2">
    <location>
        <begin position="468"/>
        <end position="487"/>
    </location>
</feature>
<feature type="binding site" evidence="1">
    <location>
        <position position="15"/>
    </location>
    <ligand>
        <name>ADP-alpha-D-glucose</name>
        <dbReference type="ChEBI" id="CHEBI:57498"/>
    </ligand>
</feature>
<reference key="1">
    <citation type="journal article" date="2007" name="PLoS Genet.">
        <title>Patterns and implications of gene gain and loss in the evolution of Prochlorococcus.</title>
        <authorList>
            <person name="Kettler G.C."/>
            <person name="Martiny A.C."/>
            <person name="Huang K."/>
            <person name="Zucker J."/>
            <person name="Coleman M.L."/>
            <person name="Rodrigue S."/>
            <person name="Chen F."/>
            <person name="Lapidus A."/>
            <person name="Ferriera S."/>
            <person name="Johnson J."/>
            <person name="Steglich C."/>
            <person name="Church G.M."/>
            <person name="Richardson P."/>
            <person name="Chisholm S.W."/>
        </authorList>
    </citation>
    <scope>NUCLEOTIDE SEQUENCE [LARGE SCALE GENOMIC DNA]</scope>
    <source>
        <strain>NATL1A</strain>
    </source>
</reference>